<feature type="chain" id="PRO_0000095133" description="Adenylosuccinate synthetase isozyme 1">
    <location>
        <begin position="1"/>
        <end position="457"/>
    </location>
</feature>
<feature type="region of interest" description="Disordered" evidence="2">
    <location>
        <begin position="1"/>
        <end position="24"/>
    </location>
</feature>
<feature type="active site" description="Proton acceptor" evidence="1">
    <location>
        <position position="43"/>
    </location>
</feature>
<feature type="active site" description="Proton donor" evidence="1">
    <location>
        <position position="71"/>
    </location>
</feature>
<feature type="binding site" evidence="1 3">
    <location>
        <begin position="42"/>
        <end position="48"/>
    </location>
    <ligand>
        <name>GTP</name>
        <dbReference type="ChEBI" id="CHEBI:37565"/>
    </ligand>
</feature>
<feature type="binding site" description="in other chain">
    <location>
        <begin position="43"/>
        <end position="46"/>
    </location>
    <ligand>
        <name>IMP</name>
        <dbReference type="ChEBI" id="CHEBI:58053"/>
        <note>ligand shared between dimeric partners</note>
    </ligand>
</feature>
<feature type="binding site">
    <location>
        <position position="43"/>
    </location>
    <ligand>
        <name>Mg(2+)</name>
        <dbReference type="ChEBI" id="CHEBI:18420"/>
    </ligand>
</feature>
<feature type="binding site">
    <location>
        <position position="43"/>
    </location>
    <ligand>
        <name>substrate</name>
    </ligand>
</feature>
<feature type="binding site" description="in other chain">
    <location>
        <begin position="68"/>
        <end position="71"/>
    </location>
    <ligand>
        <name>IMP</name>
        <dbReference type="ChEBI" id="CHEBI:58053"/>
        <note>ligand shared between dimeric partners</note>
    </ligand>
</feature>
<feature type="binding site" evidence="1 3">
    <location>
        <begin position="70"/>
        <end position="72"/>
    </location>
    <ligand>
        <name>GTP</name>
        <dbReference type="ChEBI" id="CHEBI:37565"/>
    </ligand>
</feature>
<feature type="binding site">
    <location>
        <position position="70"/>
    </location>
    <ligand>
        <name>Mg(2+)</name>
        <dbReference type="ChEBI" id="CHEBI:18420"/>
    </ligand>
</feature>
<feature type="binding site" description="in other chain" evidence="1 3">
    <location>
        <position position="163"/>
    </location>
    <ligand>
        <name>IMP</name>
        <dbReference type="ChEBI" id="CHEBI:58053"/>
        <note>ligand shared between dimeric partners</note>
    </ligand>
</feature>
<feature type="binding site" evidence="1 3">
    <location>
        <position position="177"/>
    </location>
    <ligand>
        <name>IMP</name>
        <dbReference type="ChEBI" id="CHEBI:58053"/>
        <note>ligand shared between dimeric partners</note>
    </ligand>
</feature>
<feature type="binding site" description="in other chain" evidence="1 3">
    <location>
        <position position="256"/>
    </location>
    <ligand>
        <name>IMP</name>
        <dbReference type="ChEBI" id="CHEBI:58053"/>
        <note>ligand shared between dimeric partners</note>
    </ligand>
</feature>
<feature type="binding site" description="in other chain" evidence="1 3">
    <location>
        <position position="271"/>
    </location>
    <ligand>
        <name>IMP</name>
        <dbReference type="ChEBI" id="CHEBI:58053"/>
        <note>ligand shared between dimeric partners</note>
    </ligand>
</feature>
<feature type="binding site">
    <location>
        <begin position="331"/>
        <end position="337"/>
    </location>
    <ligand>
        <name>substrate</name>
    </ligand>
</feature>
<feature type="binding site" description="in other chain" evidence="1 3">
    <location>
        <position position="335"/>
    </location>
    <ligand>
        <name>IMP</name>
        <dbReference type="ChEBI" id="CHEBI:58053"/>
        <note>ligand shared between dimeric partners</note>
    </ligand>
</feature>
<feature type="binding site" evidence="1 3">
    <location>
        <position position="337"/>
    </location>
    <ligand>
        <name>GTP</name>
        <dbReference type="ChEBI" id="CHEBI:37565"/>
    </ligand>
</feature>
<feature type="binding site" evidence="1 3">
    <location>
        <begin position="363"/>
        <end position="365"/>
    </location>
    <ligand>
        <name>GTP</name>
        <dbReference type="ChEBI" id="CHEBI:37565"/>
    </ligand>
</feature>
<feature type="binding site" evidence="1 3">
    <location>
        <begin position="445"/>
        <end position="448"/>
    </location>
    <ligand>
        <name>GTP</name>
        <dbReference type="ChEBI" id="CHEBI:37565"/>
    </ligand>
</feature>
<feature type="splice variant" id="VSP_008422" description="In isoform 2." evidence="7">
    <original>L</original>
    <variation>LENEVPHEPLPSASLLPMCWLLAP</variation>
    <location>
        <position position="136"/>
    </location>
</feature>
<feature type="turn" evidence="10">
    <location>
        <begin position="27"/>
        <end position="29"/>
    </location>
</feature>
<feature type="strand" evidence="9">
    <location>
        <begin position="33"/>
        <end position="42"/>
    </location>
</feature>
<feature type="helix" evidence="9">
    <location>
        <begin position="46"/>
        <end position="54"/>
    </location>
</feature>
<feature type="strand" evidence="9">
    <location>
        <begin position="58"/>
        <end position="62"/>
    </location>
</feature>
<feature type="strand" evidence="9">
    <location>
        <begin position="71"/>
        <end position="74"/>
    </location>
</feature>
<feature type="strand" evidence="9">
    <location>
        <begin position="79"/>
        <end position="85"/>
    </location>
</feature>
<feature type="helix" evidence="9">
    <location>
        <begin position="87"/>
        <end position="90"/>
    </location>
</feature>
<feature type="strand" evidence="9">
    <location>
        <begin position="94"/>
        <end position="98"/>
    </location>
</feature>
<feature type="strand" evidence="9">
    <location>
        <begin position="102"/>
        <end position="104"/>
    </location>
</feature>
<feature type="helix" evidence="9">
    <location>
        <begin position="106"/>
        <end position="117"/>
    </location>
</feature>
<feature type="turn" evidence="9">
    <location>
        <begin position="118"/>
        <end position="120"/>
    </location>
</feature>
<feature type="helix" evidence="9">
    <location>
        <begin position="124"/>
        <end position="126"/>
    </location>
</feature>
<feature type="strand" evidence="9">
    <location>
        <begin position="127"/>
        <end position="131"/>
    </location>
</feature>
<feature type="helix" evidence="9">
    <location>
        <begin position="139"/>
        <end position="155"/>
    </location>
</feature>
<feature type="strand" evidence="9">
    <location>
        <begin position="164"/>
        <end position="166"/>
    </location>
</feature>
<feature type="helix" evidence="9">
    <location>
        <begin position="167"/>
        <end position="175"/>
    </location>
</feature>
<feature type="helix" evidence="9">
    <location>
        <begin position="182"/>
        <end position="185"/>
    </location>
</feature>
<feature type="helix" evidence="9">
    <location>
        <begin position="189"/>
        <end position="205"/>
    </location>
</feature>
<feature type="helix" evidence="9">
    <location>
        <begin position="214"/>
        <end position="228"/>
    </location>
</feature>
<feature type="helix" evidence="9">
    <location>
        <begin position="229"/>
        <end position="231"/>
    </location>
</feature>
<feature type="helix" evidence="9">
    <location>
        <begin position="235"/>
        <end position="244"/>
    </location>
</feature>
<feature type="strand" evidence="9">
    <location>
        <begin position="250"/>
        <end position="253"/>
    </location>
</feature>
<feature type="helix" evidence="9">
    <location>
        <begin position="258"/>
        <end position="260"/>
    </location>
</feature>
<feature type="turn" evidence="9">
    <location>
        <begin position="262"/>
        <end position="264"/>
    </location>
</feature>
<feature type="helix" evidence="9">
    <location>
        <begin position="278"/>
        <end position="284"/>
    </location>
</feature>
<feature type="helix" evidence="9">
    <location>
        <begin position="288"/>
        <end position="290"/>
    </location>
</feature>
<feature type="strand" evidence="9">
    <location>
        <begin position="291"/>
        <end position="304"/>
    </location>
</feature>
<feature type="strand" evidence="9">
    <location>
        <begin position="306"/>
        <end position="308"/>
    </location>
</feature>
<feature type="helix" evidence="9">
    <location>
        <begin position="317"/>
        <end position="325"/>
    </location>
</feature>
<feature type="turn" evidence="9">
    <location>
        <begin position="331"/>
        <end position="333"/>
    </location>
</feature>
<feature type="strand" evidence="9">
    <location>
        <begin position="338"/>
        <end position="340"/>
    </location>
</feature>
<feature type="helix" evidence="9">
    <location>
        <begin position="344"/>
        <end position="354"/>
    </location>
</feature>
<feature type="strand" evidence="9">
    <location>
        <begin position="357"/>
        <end position="362"/>
    </location>
</feature>
<feature type="helix" evidence="9">
    <location>
        <begin position="364"/>
        <end position="367"/>
    </location>
</feature>
<feature type="strand" evidence="9">
    <location>
        <begin position="371"/>
        <end position="381"/>
    </location>
</feature>
<feature type="strand" evidence="11">
    <location>
        <begin position="384"/>
        <end position="388"/>
    </location>
</feature>
<feature type="helix" evidence="9">
    <location>
        <begin position="395"/>
        <end position="398"/>
    </location>
</feature>
<feature type="strand" evidence="9">
    <location>
        <begin position="400"/>
        <end position="407"/>
    </location>
</feature>
<feature type="helix" evidence="9">
    <location>
        <begin position="419"/>
        <end position="421"/>
    </location>
</feature>
<feature type="helix" evidence="9">
    <location>
        <begin position="424"/>
        <end position="437"/>
    </location>
</feature>
<feature type="strand" evidence="9">
    <location>
        <begin position="441"/>
        <end position="445"/>
    </location>
</feature>
<feature type="strand" evidence="9">
    <location>
        <begin position="447"/>
        <end position="449"/>
    </location>
</feature>
<feature type="turn" evidence="9">
    <location>
        <begin position="450"/>
        <end position="452"/>
    </location>
</feature>
<feature type="strand" evidence="9">
    <location>
        <begin position="453"/>
        <end position="455"/>
    </location>
</feature>
<gene>
    <name type="primary">Adss1</name>
    <name evidence="8" type="synonym">Adssl1</name>
</gene>
<dbReference type="EC" id="6.3.4.4" evidence="1"/>
<dbReference type="EMBL" id="M74495">
    <property type="protein sequence ID" value="AAA82870.1"/>
    <property type="molecule type" value="mRNA"/>
</dbReference>
<dbReference type="EMBL" id="BC039943">
    <property type="protein sequence ID" value="AAH39943.1"/>
    <property type="molecule type" value="mRNA"/>
</dbReference>
<dbReference type="CCDS" id="CCDS26192.1">
    <molecule id="P28650-1"/>
</dbReference>
<dbReference type="PIR" id="A39317">
    <property type="entry name" value="AJMSDS"/>
</dbReference>
<dbReference type="RefSeq" id="NP_031447.1">
    <molecule id="P28650-1"/>
    <property type="nucleotide sequence ID" value="NM_007421.2"/>
</dbReference>
<dbReference type="PDB" id="1IWE">
    <property type="method" value="X-ray"/>
    <property type="resolution" value="2.10 A"/>
    <property type="chains" value="A/B=1-457"/>
</dbReference>
<dbReference type="PDB" id="1J4B">
    <property type="method" value="X-ray"/>
    <property type="resolution" value="2.50 A"/>
    <property type="chains" value="A=1-457"/>
</dbReference>
<dbReference type="PDB" id="1LNY">
    <property type="method" value="X-ray"/>
    <property type="resolution" value="2.20 A"/>
    <property type="chains" value="A/B=1-457"/>
</dbReference>
<dbReference type="PDB" id="1LON">
    <property type="method" value="X-ray"/>
    <property type="resolution" value="2.10 A"/>
    <property type="chains" value="A=1-457"/>
</dbReference>
<dbReference type="PDB" id="1LOO">
    <property type="method" value="X-ray"/>
    <property type="resolution" value="2.20 A"/>
    <property type="chains" value="A=1-457"/>
</dbReference>
<dbReference type="PDB" id="1MEZ">
    <property type="method" value="X-ray"/>
    <property type="resolution" value="2.40 A"/>
    <property type="chains" value="A=1-457"/>
</dbReference>
<dbReference type="PDB" id="1MF0">
    <property type="method" value="X-ray"/>
    <property type="resolution" value="2.50 A"/>
    <property type="chains" value="A=1-457"/>
</dbReference>
<dbReference type="PDB" id="1MF1">
    <property type="method" value="X-ray"/>
    <property type="resolution" value="2.70 A"/>
    <property type="chains" value="A=1-457"/>
</dbReference>
<dbReference type="PDB" id="2DGN">
    <property type="method" value="X-ray"/>
    <property type="resolution" value="2.40 A"/>
    <property type="chains" value="A=1-457"/>
</dbReference>
<dbReference type="PDBsum" id="1IWE"/>
<dbReference type="PDBsum" id="1J4B"/>
<dbReference type="PDBsum" id="1LNY"/>
<dbReference type="PDBsum" id="1LON"/>
<dbReference type="PDBsum" id="1LOO"/>
<dbReference type="PDBsum" id="1MEZ"/>
<dbReference type="PDBsum" id="1MF0"/>
<dbReference type="PDBsum" id="1MF1"/>
<dbReference type="PDBsum" id="2DGN"/>
<dbReference type="SMR" id="P28650"/>
<dbReference type="BioGRID" id="198010">
    <property type="interactions" value="6"/>
</dbReference>
<dbReference type="FunCoup" id="P28650">
    <property type="interactions" value="1004"/>
</dbReference>
<dbReference type="STRING" id="10090.ENSMUSP00000021726"/>
<dbReference type="GlyGen" id="P28650">
    <property type="glycosylation" value="1 site"/>
</dbReference>
<dbReference type="iPTMnet" id="P28650"/>
<dbReference type="PhosphoSitePlus" id="P28650"/>
<dbReference type="SwissPalm" id="P28650"/>
<dbReference type="jPOST" id="P28650"/>
<dbReference type="PaxDb" id="10090-ENSMUSP00000136572"/>
<dbReference type="PeptideAtlas" id="P28650"/>
<dbReference type="ProteomicsDB" id="302033">
    <molecule id="P28650-1"/>
</dbReference>
<dbReference type="ProteomicsDB" id="302034">
    <molecule id="P28650-2"/>
</dbReference>
<dbReference type="Antibodypedia" id="28209">
    <property type="antibodies" value="101 antibodies from 18 providers"/>
</dbReference>
<dbReference type="DNASU" id="11565"/>
<dbReference type="Ensembl" id="ENSMUST00000021726.8">
    <molecule id="P28650-1"/>
    <property type="protein sequence ID" value="ENSMUSP00000021726.7"/>
    <property type="gene ID" value="ENSMUSG00000011148.15"/>
</dbReference>
<dbReference type="GeneID" id="11565"/>
<dbReference type="KEGG" id="mmu:11565"/>
<dbReference type="UCSC" id="uc007peu.2">
    <molecule id="P28650-1"/>
    <property type="organism name" value="mouse"/>
</dbReference>
<dbReference type="AGR" id="MGI:87947"/>
<dbReference type="CTD" id="122622"/>
<dbReference type="MGI" id="MGI:87947">
    <property type="gene designation" value="Adss1"/>
</dbReference>
<dbReference type="VEuPathDB" id="HostDB:ENSMUSG00000011148"/>
<dbReference type="eggNOG" id="KOG1355">
    <property type="taxonomic scope" value="Eukaryota"/>
</dbReference>
<dbReference type="GeneTree" id="ENSGT00390000015553"/>
<dbReference type="HOGENOM" id="CLU_029848_0_0_1"/>
<dbReference type="InParanoid" id="P28650"/>
<dbReference type="OMA" id="TKAYSSC"/>
<dbReference type="OrthoDB" id="55448at9989"/>
<dbReference type="PhylomeDB" id="P28650"/>
<dbReference type="BRENDA" id="6.3.4.4">
    <property type="organism ID" value="3474"/>
</dbReference>
<dbReference type="Reactome" id="R-MMU-73817">
    <property type="pathway name" value="Purine ribonucleoside monophosphate biosynthesis"/>
</dbReference>
<dbReference type="UniPathway" id="UPA00075">
    <property type="reaction ID" value="UER00335"/>
</dbReference>
<dbReference type="BioGRID-ORCS" id="11565">
    <property type="hits" value="3 hits in 78 CRISPR screens"/>
</dbReference>
<dbReference type="ChiTaRS" id="Adssl1">
    <property type="organism name" value="mouse"/>
</dbReference>
<dbReference type="EvolutionaryTrace" id="P28650"/>
<dbReference type="PRO" id="PR:P28650"/>
<dbReference type="Proteomes" id="UP000000589">
    <property type="component" value="Chromosome 12"/>
</dbReference>
<dbReference type="RNAct" id="P28650">
    <property type="molecule type" value="protein"/>
</dbReference>
<dbReference type="Bgee" id="ENSMUSG00000011148">
    <property type="expression patterns" value="Expressed in triceps brachii and 215 other cell types or tissues"/>
</dbReference>
<dbReference type="ExpressionAtlas" id="P28650">
    <property type="expression patterns" value="baseline and differential"/>
</dbReference>
<dbReference type="GO" id="GO:0005737">
    <property type="term" value="C:cytoplasm"/>
    <property type="evidence" value="ECO:0000314"/>
    <property type="project" value="MGI"/>
</dbReference>
<dbReference type="GO" id="GO:0016020">
    <property type="term" value="C:membrane"/>
    <property type="evidence" value="ECO:0007669"/>
    <property type="project" value="UniProtKB-SubCell"/>
</dbReference>
<dbReference type="GO" id="GO:0051015">
    <property type="term" value="F:actin filament binding"/>
    <property type="evidence" value="ECO:0007669"/>
    <property type="project" value="Ensembl"/>
</dbReference>
<dbReference type="GO" id="GO:0004019">
    <property type="term" value="F:adenylosuccinate synthase activity"/>
    <property type="evidence" value="ECO:0000314"/>
    <property type="project" value="MGI"/>
</dbReference>
<dbReference type="GO" id="GO:0005525">
    <property type="term" value="F:GTP binding"/>
    <property type="evidence" value="ECO:0007669"/>
    <property type="project" value="UniProtKB-UniRule"/>
</dbReference>
<dbReference type="GO" id="GO:0003924">
    <property type="term" value="F:GTPase activity"/>
    <property type="evidence" value="ECO:0007669"/>
    <property type="project" value="Ensembl"/>
</dbReference>
<dbReference type="GO" id="GO:0042802">
    <property type="term" value="F:identical protein binding"/>
    <property type="evidence" value="ECO:0007669"/>
    <property type="project" value="Ensembl"/>
</dbReference>
<dbReference type="GO" id="GO:0000287">
    <property type="term" value="F:magnesium ion binding"/>
    <property type="evidence" value="ECO:0007669"/>
    <property type="project" value="UniProtKB-UniRule"/>
</dbReference>
<dbReference type="GO" id="GO:0044208">
    <property type="term" value="P:'de novo' AMP biosynthetic process"/>
    <property type="evidence" value="ECO:0007669"/>
    <property type="project" value="UniProtKB-UniRule"/>
</dbReference>
<dbReference type="GO" id="GO:0044209">
    <property type="term" value="P:AMP salvage"/>
    <property type="evidence" value="ECO:0000314"/>
    <property type="project" value="MGI"/>
</dbReference>
<dbReference type="GO" id="GO:0006531">
    <property type="term" value="P:aspartate metabolic process"/>
    <property type="evidence" value="ECO:0007669"/>
    <property type="project" value="Ensembl"/>
</dbReference>
<dbReference type="GO" id="GO:0071257">
    <property type="term" value="P:cellular response to electrical stimulus"/>
    <property type="evidence" value="ECO:0007669"/>
    <property type="project" value="Ensembl"/>
</dbReference>
<dbReference type="GO" id="GO:0071466">
    <property type="term" value="P:cellular response to xenobiotic stimulus"/>
    <property type="evidence" value="ECO:0007669"/>
    <property type="project" value="Ensembl"/>
</dbReference>
<dbReference type="GO" id="GO:0006541">
    <property type="term" value="P:glutamine metabolic process"/>
    <property type="evidence" value="ECO:0007669"/>
    <property type="project" value="Ensembl"/>
</dbReference>
<dbReference type="GO" id="GO:0046040">
    <property type="term" value="P:IMP metabolic process"/>
    <property type="evidence" value="ECO:0007669"/>
    <property type="project" value="Ensembl"/>
</dbReference>
<dbReference type="GO" id="GO:0006163">
    <property type="term" value="P:purine nucleotide metabolic process"/>
    <property type="evidence" value="ECO:0000314"/>
    <property type="project" value="MGI"/>
</dbReference>
<dbReference type="GO" id="GO:0014850">
    <property type="term" value="P:response to muscle activity"/>
    <property type="evidence" value="ECO:0007669"/>
    <property type="project" value="Ensembl"/>
</dbReference>
<dbReference type="GO" id="GO:0042594">
    <property type="term" value="P:response to starvation"/>
    <property type="evidence" value="ECO:0007669"/>
    <property type="project" value="Ensembl"/>
</dbReference>
<dbReference type="CDD" id="cd03108">
    <property type="entry name" value="AdSS"/>
    <property type="match status" value="1"/>
</dbReference>
<dbReference type="FunFam" id="3.90.170.10:FF:000001">
    <property type="entry name" value="Adenylosuccinate synthetase"/>
    <property type="match status" value="1"/>
</dbReference>
<dbReference type="FunFam" id="1.10.300.10:FF:000002">
    <property type="entry name" value="Adenylosuccinate synthetase, chloroplastic"/>
    <property type="match status" value="1"/>
</dbReference>
<dbReference type="Gene3D" id="3.40.440.10">
    <property type="entry name" value="Adenylosuccinate Synthetase, subunit A, domain 1"/>
    <property type="match status" value="1"/>
</dbReference>
<dbReference type="Gene3D" id="1.10.300.10">
    <property type="entry name" value="Adenylosuccinate Synthetase, subunit A, domain 2"/>
    <property type="match status" value="1"/>
</dbReference>
<dbReference type="Gene3D" id="3.90.170.10">
    <property type="entry name" value="Adenylosuccinate Synthetase, subunit A, domain 3"/>
    <property type="match status" value="1"/>
</dbReference>
<dbReference type="HAMAP" id="MF_00011">
    <property type="entry name" value="Adenylosucc_synth"/>
    <property type="match status" value="1"/>
</dbReference>
<dbReference type="HAMAP" id="MF_03126">
    <property type="entry name" value="Adenylosucc_synth_vert_basic"/>
    <property type="match status" value="1"/>
</dbReference>
<dbReference type="InterPro" id="IPR018220">
    <property type="entry name" value="Adenylosuccin_syn_GTP-bd"/>
</dbReference>
<dbReference type="InterPro" id="IPR033128">
    <property type="entry name" value="Adenylosuccin_syn_Lys_AS"/>
</dbReference>
<dbReference type="InterPro" id="IPR042109">
    <property type="entry name" value="Adenylosuccinate_synth_dom1"/>
</dbReference>
<dbReference type="InterPro" id="IPR042110">
    <property type="entry name" value="Adenylosuccinate_synth_dom2"/>
</dbReference>
<dbReference type="InterPro" id="IPR042111">
    <property type="entry name" value="Adenylosuccinate_synth_dom3"/>
</dbReference>
<dbReference type="InterPro" id="IPR001114">
    <property type="entry name" value="Adenylosuccinate_synthetase"/>
</dbReference>
<dbReference type="InterPro" id="IPR027509">
    <property type="entry name" value="AdSS_1_vert"/>
</dbReference>
<dbReference type="InterPro" id="IPR027417">
    <property type="entry name" value="P-loop_NTPase"/>
</dbReference>
<dbReference type="NCBIfam" id="NF002223">
    <property type="entry name" value="PRK01117.1"/>
    <property type="match status" value="1"/>
</dbReference>
<dbReference type="NCBIfam" id="TIGR00184">
    <property type="entry name" value="purA"/>
    <property type="match status" value="1"/>
</dbReference>
<dbReference type="PANTHER" id="PTHR11846">
    <property type="entry name" value="ADENYLOSUCCINATE SYNTHETASE"/>
    <property type="match status" value="1"/>
</dbReference>
<dbReference type="PANTHER" id="PTHR11846:SF2">
    <property type="entry name" value="ADENYLOSUCCINATE SYNTHETASE ISOZYME 1"/>
    <property type="match status" value="1"/>
</dbReference>
<dbReference type="Pfam" id="PF00709">
    <property type="entry name" value="Adenylsucc_synt"/>
    <property type="match status" value="1"/>
</dbReference>
<dbReference type="SMART" id="SM00788">
    <property type="entry name" value="Adenylsucc_synt"/>
    <property type="match status" value="1"/>
</dbReference>
<dbReference type="SUPFAM" id="SSF52540">
    <property type="entry name" value="P-loop containing nucleoside triphosphate hydrolases"/>
    <property type="match status" value="1"/>
</dbReference>
<dbReference type="PROSITE" id="PS01266">
    <property type="entry name" value="ADENYLOSUCCIN_SYN_1"/>
    <property type="match status" value="1"/>
</dbReference>
<dbReference type="PROSITE" id="PS00513">
    <property type="entry name" value="ADENYLOSUCCIN_SYN_2"/>
    <property type="match status" value="1"/>
</dbReference>
<sequence>MSGTRASNDRPPGTGGVKRGRLQQEAAATGSRVTVVLGAQWGDEGKGKVVDLLATDADIVSRCQGGNNAGHTVVVDGKEYDFHLLPSGIINTKAVSFIGNGVVIHLPGLFEEAEKNEKKGLKDWEKRLIISDRAHLVFDFHQAVDGLQEVQRQAQEGKNIGTTKKGIGPTYSSKAARTGLRICDLLSDFDEFSARFKNLAHQHQSMFPTLEIDVEGQLKRLKGFAERIRPMVRDGVYFMYEALHGPPKKVLVEGANAALLDIDFGTYPFVTSSNCTVGGVCTGLGIPPQNIGDVYGVVKAYTTRVGIGAFPTEQINEIGDLLQNRGHEWGVTTGRKRRCGWLDLMILRYAHMVNGFTALALTKLDILDVLSEIKVGISYKLNGKRIPYFPANQEILQKVEVEYETLPGWKADTTGARKWEDLPPQAQSYVRFVENHMGVAVKWVGVGKSRESMIQLF</sequence>
<proteinExistence type="evidence at protein level"/>
<evidence type="ECO:0000255" key="1">
    <source>
        <dbReference type="HAMAP-Rule" id="MF_03126"/>
    </source>
</evidence>
<evidence type="ECO:0000256" key="2">
    <source>
        <dbReference type="SAM" id="MobiDB-lite"/>
    </source>
</evidence>
<evidence type="ECO:0000269" key="3">
    <source>
    </source>
</evidence>
<evidence type="ECO:0000269" key="4">
    <source>
    </source>
</evidence>
<evidence type="ECO:0000303" key="5">
    <source>
    </source>
</evidence>
<evidence type="ECO:0000303" key="6">
    <source>
    </source>
</evidence>
<evidence type="ECO:0000303" key="7">
    <source>
    </source>
</evidence>
<evidence type="ECO:0000312" key="8">
    <source>
        <dbReference type="MGI" id="MGI:87947"/>
    </source>
</evidence>
<evidence type="ECO:0007829" key="9">
    <source>
        <dbReference type="PDB" id="1IWE"/>
    </source>
</evidence>
<evidence type="ECO:0007829" key="10">
    <source>
        <dbReference type="PDB" id="1J4B"/>
    </source>
</evidence>
<evidence type="ECO:0007829" key="11">
    <source>
        <dbReference type="PDB" id="1LOO"/>
    </source>
</evidence>
<name>PURA1_MOUSE</name>
<comment type="function">
    <text evidence="4">Component of the purine nucleotide cycle (PNC), which interconverts IMP and AMP to regulate the nucleotide levels in various tissues, and which contributes to glycolysis and ammoniagenesis. Catalyzes the first committed step in the biosynthesis of AMP from IMP.</text>
</comment>
<comment type="catalytic activity">
    <reaction evidence="1">
        <text>IMP + L-aspartate + GTP = N(6)-(1,2-dicarboxyethyl)-AMP + GDP + phosphate + 2 H(+)</text>
        <dbReference type="Rhea" id="RHEA:15753"/>
        <dbReference type="ChEBI" id="CHEBI:15378"/>
        <dbReference type="ChEBI" id="CHEBI:29991"/>
        <dbReference type="ChEBI" id="CHEBI:37565"/>
        <dbReference type="ChEBI" id="CHEBI:43474"/>
        <dbReference type="ChEBI" id="CHEBI:57567"/>
        <dbReference type="ChEBI" id="CHEBI:58053"/>
        <dbReference type="ChEBI" id="CHEBI:58189"/>
        <dbReference type="EC" id="6.3.4.4"/>
    </reaction>
</comment>
<comment type="cofactor">
    <cofactor>
        <name>Mg(2+)</name>
        <dbReference type="ChEBI" id="CHEBI:18420"/>
    </cofactor>
    <text>Binds 1 Mg(2+) ion per subunit.</text>
</comment>
<comment type="activity regulation">
    <text>Weakly inhibited by AMP non-competitively to all substrates. Inhibited by IMP non-competitively with respect to GTP. Inhibited by fructose 1,6-bisphosphate competitively with respect to IMP.</text>
</comment>
<comment type="biophysicochemical properties">
    <kinetics>
        <KM evidence="4">12 uM for GTP</KM>
        <KM evidence="4">45 uM for IMP</KM>
        <KM evidence="4">140 uM for L-aspartate</KM>
    </kinetics>
    <phDependence>
        <text evidence="4">Optimum pH is 6.6-6.9.</text>
    </phDependence>
</comment>
<comment type="pathway">
    <text evidence="1">Purine metabolism; AMP biosynthesis via de novo pathway; AMP from IMP: step 1/2.</text>
</comment>
<comment type="subunit">
    <text evidence="1 3">Homodimer.</text>
</comment>
<comment type="subcellular location">
    <subcellularLocation>
        <location>Cytoplasm</location>
    </subcellularLocation>
    <subcellularLocation>
        <location>Membrane</location>
        <topology>Peripheral membrane protein</topology>
    </subcellularLocation>
    <text>Partially associated with particulate fractions.</text>
</comment>
<comment type="alternative products">
    <event type="alternative splicing"/>
    <isoform>
        <id>P28650-1</id>
        <name>1</name>
        <sequence type="displayed"/>
    </isoform>
    <isoform>
        <id>P28650-2</id>
        <name>2</name>
        <sequence type="described" ref="VSP_008422"/>
    </isoform>
</comment>
<comment type="tissue specificity">
    <text>High levels in muscle.</text>
</comment>
<comment type="similarity">
    <text evidence="1">Belongs to the adenylosuccinate synthetase family.</text>
</comment>
<organism>
    <name type="scientific">Mus musculus</name>
    <name type="common">Mouse</name>
    <dbReference type="NCBI Taxonomy" id="10090"/>
    <lineage>
        <taxon>Eukaryota</taxon>
        <taxon>Metazoa</taxon>
        <taxon>Chordata</taxon>
        <taxon>Craniata</taxon>
        <taxon>Vertebrata</taxon>
        <taxon>Euteleostomi</taxon>
        <taxon>Mammalia</taxon>
        <taxon>Eutheria</taxon>
        <taxon>Euarchontoglires</taxon>
        <taxon>Glires</taxon>
        <taxon>Rodentia</taxon>
        <taxon>Myomorpha</taxon>
        <taxon>Muroidea</taxon>
        <taxon>Muridae</taxon>
        <taxon>Murinae</taxon>
        <taxon>Mus</taxon>
        <taxon>Mus</taxon>
    </lineage>
</organism>
<reference key="1">
    <citation type="journal article" date="1991" name="J. Biol. Chem.">
        <title>Molecular cloning and expression of a mouse muscle cDNA encoding adenylosuccinate synthetase.</title>
        <authorList>
            <person name="Guicherit O.M."/>
            <person name="Rudolph F.B."/>
            <person name="Kellems R.E."/>
            <person name="Cooper B.F."/>
        </authorList>
    </citation>
    <scope>NUCLEOTIDE SEQUENCE [MRNA] (ISOFORM 1)</scope>
    <source>
        <tissue>Muscle</tissue>
    </source>
</reference>
<reference key="2">
    <citation type="journal article" date="1994" name="J. Biol. Chem.">
        <title>Amplification of an adenylosuccinate synthetase gene in alanosine-resistant murine T-lymphoma cells. Molecular cloning of a cDNA encoding the 'non-muscle' isozyme.</title>
        <authorList>
            <person name="Guicherit O.M."/>
            <person name="Cooper B.F."/>
            <person name="Rudolph F.B."/>
            <person name="Kellems R.E."/>
        </authorList>
    </citation>
    <scope>SEQUENCE REVISION</scope>
</reference>
<reference key="3">
    <citation type="journal article" date="2004" name="Genome Res.">
        <title>The status, quality, and expansion of the NIH full-length cDNA project: the Mammalian Gene Collection (MGC).</title>
        <authorList>
            <consortium name="The MGC Project Team"/>
        </authorList>
    </citation>
    <scope>NUCLEOTIDE SEQUENCE [LARGE SCALE MRNA] (ISOFORM 2)</scope>
    <source>
        <strain>Czech II</strain>
        <tissue>Mammary tumor</tissue>
    </source>
</reference>
<reference key="4">
    <citation type="journal article" date="2003" name="J. Biol. Chem.">
        <title>Variations in the response of mouse isozymes of adenylosuccinate synthetase to inhibitors of physiological relevance.</title>
        <authorList>
            <person name="Borza T."/>
            <person name="Iancu C.V."/>
            <person name="Pike E."/>
            <person name="Honzatko R.B."/>
            <person name="Fromm H.J."/>
        </authorList>
    </citation>
    <scope>FUNCTION</scope>
    <scope>BIOPHYSICOCHEMICAL PROPERTIES</scope>
</reference>
<reference key="5">
    <citation type="journal article" date="2010" name="Cell">
        <title>A tissue-specific atlas of mouse protein phosphorylation and expression.</title>
        <authorList>
            <person name="Huttlin E.L."/>
            <person name="Jedrychowski M.P."/>
            <person name="Elias J.E."/>
            <person name="Goswami T."/>
            <person name="Rad R."/>
            <person name="Beausoleil S.A."/>
            <person name="Villen J."/>
            <person name="Haas W."/>
            <person name="Sowa M.E."/>
            <person name="Gygi S.P."/>
        </authorList>
    </citation>
    <scope>IDENTIFICATION BY MASS SPECTROMETRY [LARGE SCALE ANALYSIS]</scope>
    <source>
        <tissue>Brain</tissue>
        <tissue>Brown adipose tissue</tissue>
        <tissue>Heart</tissue>
        <tissue>Kidney</tissue>
        <tissue>Liver</tissue>
        <tissue>Lung</tissue>
        <tissue>Spleen</tissue>
    </source>
</reference>
<reference key="6">
    <citation type="journal article" date="2001" name="J. Biol. Chem.">
        <title>Recombinant mouse muscle adenylosuccinate synthetase: overexpression, kinetics, and crystal structure.</title>
        <authorList>
            <person name="Iancu C.V."/>
            <person name="Borza T."/>
            <person name="Choe J.Y."/>
            <person name="Fromm H.J."/>
            <person name="Honzatko R.B."/>
        </authorList>
    </citation>
    <scope>X-RAY CRYSTALLOGRAPHY (2.50 ANGSTROMS)</scope>
</reference>
<reference key="7">
    <citation type="journal article" date="2002" name="J. Biol. Chem.">
        <title>IMP, GTP, and 6-phosphoryl-IMP complexes of recombinant mouse muscle adenylosuccinate synthetase.</title>
        <authorList>
            <person name="Iancu C.V."/>
            <person name="Borza T."/>
            <person name="Fromm H.J."/>
            <person name="Honzatko R.B."/>
        </authorList>
    </citation>
    <scope>X-RAY CRYSTALLOGRAPHY (2.10 ANGSTROMS) IN COMPLEX WITH IMP AND GTP</scope>
</reference>
<reference key="8">
    <citation type="journal article" date="2002" name="J. Biol. Chem.">
        <title>Feedback inhibition and product complexes of recombinant mouse muscle adenylosuccinate synthetase.</title>
        <authorList>
            <person name="Iancu C.V."/>
            <person name="Borza T."/>
            <person name="Fromm H.J."/>
            <person name="Honzatko R.B."/>
        </authorList>
    </citation>
    <scope>X-RAY CRYSTALLOGRAPHY (2.40 ANGSTROMS)</scope>
</reference>
<reference key="9">
    <citation type="journal article" date="2006" name="Biochemistry">
        <title>Cavitation as a mechanism of substrate discrimination by adenylosuccinate synthetases.</title>
        <authorList>
            <person name="Iancu C.V."/>
            <person name="Zhou Y."/>
            <person name="Borza T."/>
            <person name="Fromm H.J."/>
            <person name="Honzatko R.B."/>
        </authorList>
    </citation>
    <scope>X-RAY CRYSTALLOGRAPHY (2.40 ANGSTROMS)</scope>
</reference>
<keyword id="KW-0002">3D-structure</keyword>
<keyword id="KW-0025">Alternative splicing</keyword>
<keyword id="KW-0963">Cytoplasm</keyword>
<keyword id="KW-0342">GTP-binding</keyword>
<keyword id="KW-0436">Ligase</keyword>
<keyword id="KW-0460">Magnesium</keyword>
<keyword id="KW-0472">Membrane</keyword>
<keyword id="KW-0479">Metal-binding</keyword>
<keyword id="KW-0547">Nucleotide-binding</keyword>
<keyword id="KW-0658">Purine biosynthesis</keyword>
<keyword id="KW-1185">Reference proteome</keyword>
<accession>P28650</accession>
<accession>Q8CHQ1</accession>
<protein>
    <recommendedName>
        <fullName evidence="1">Adenylosuccinate synthetase isozyme 1</fullName>
        <shortName evidence="1">AMPSase 1</shortName>
        <shortName evidence="1">AdSS 1</shortName>
        <ecNumber evidence="1">6.3.4.4</ecNumber>
    </recommendedName>
    <alternativeName>
        <fullName evidence="8">Adenylosuccinate synthetase like 1</fullName>
    </alternativeName>
    <alternativeName>
        <fullName evidence="1">Adenylosuccinate synthetase, basic isozyme</fullName>
    </alternativeName>
    <alternativeName>
        <fullName evidence="1 5 6">Adenylosuccinate synthetase, muscle isozyme</fullName>
        <shortName evidence="1">M-type adenylosuccinate synthetase</shortName>
    </alternativeName>
    <alternativeName>
        <fullName evidence="1">IMP--aspartate ligase 1</fullName>
    </alternativeName>
</protein>